<keyword id="KW-0002">3D-structure</keyword>
<keyword id="KW-0003">3Fe-4S</keyword>
<keyword id="KW-0249">Electron transport</keyword>
<keyword id="KW-0408">Iron</keyword>
<keyword id="KW-0411">Iron-sulfur</keyword>
<keyword id="KW-0479">Metal-binding</keyword>
<keyword id="KW-1185">Reference proteome</keyword>
<keyword id="KW-0813">Transport</keyword>
<reference key="1">
    <citation type="journal article" date="1998" name="Nature">
        <title>Deciphering the biology of Mycobacterium tuberculosis from the complete genome sequence.</title>
        <authorList>
            <person name="Cole S.T."/>
            <person name="Brosch R."/>
            <person name="Parkhill J."/>
            <person name="Garnier T."/>
            <person name="Churcher C.M."/>
            <person name="Harris D.E."/>
            <person name="Gordon S.V."/>
            <person name="Eiglmeier K."/>
            <person name="Gas S."/>
            <person name="Barry C.E. III"/>
            <person name="Tekaia F."/>
            <person name="Badcock K."/>
            <person name="Basham D."/>
            <person name="Brown D."/>
            <person name="Chillingworth T."/>
            <person name="Connor R."/>
            <person name="Davies R.M."/>
            <person name="Devlin K."/>
            <person name="Feltwell T."/>
            <person name="Gentles S."/>
            <person name="Hamlin N."/>
            <person name="Holroyd S."/>
            <person name="Hornsby T."/>
            <person name="Jagels K."/>
            <person name="Krogh A."/>
            <person name="McLean J."/>
            <person name="Moule S."/>
            <person name="Murphy L.D."/>
            <person name="Oliver S."/>
            <person name="Osborne J."/>
            <person name="Quail M.A."/>
            <person name="Rajandream M.A."/>
            <person name="Rogers J."/>
            <person name="Rutter S."/>
            <person name="Seeger K."/>
            <person name="Skelton S."/>
            <person name="Squares S."/>
            <person name="Squares R."/>
            <person name="Sulston J.E."/>
            <person name="Taylor K."/>
            <person name="Whitehead S."/>
            <person name="Barrell B.G."/>
        </authorList>
    </citation>
    <scope>NUCLEOTIDE SEQUENCE [LARGE SCALE GENOMIC DNA]</scope>
    <source>
        <strain>ATCC 25618 / H37Rv</strain>
    </source>
</reference>
<reference evidence="4" key="2">
    <citation type="journal article" date="2022" name="Front. Mol. Biosci.">
        <title>Structural insights into 3Fe-4S ferredoxins diversity in M. tuberculosis highlighted by a first redox complex with P450.</title>
        <authorList>
            <person name="Gilep A."/>
            <person name="Varaksa T."/>
            <person name="Bukhdruker S."/>
            <person name="Kavaleuski A."/>
            <person name="Ryzhykau Y."/>
            <person name="Smolskaya S."/>
            <person name="Sushko T."/>
            <person name="Tsumoto K."/>
            <person name="Grabovec I."/>
            <person name="Kapranov I."/>
            <person name="Okhrimenko I."/>
            <person name="Marin E."/>
            <person name="Shevtsov M."/>
            <person name="Mishin A."/>
            <person name="Kovalev K."/>
            <person name="Kuklin A."/>
            <person name="Gordeliy V."/>
            <person name="Kaluzhskiy L."/>
            <person name="Gnedenko O."/>
            <person name="Yablokov E."/>
            <person name="Ivanov A."/>
            <person name="Borshchevskiy V."/>
            <person name="Strushkevich N."/>
        </authorList>
    </citation>
    <scope>X-RAY CRYSTALLOGRAPHY (1.6 ANGSTROMS) OF COMPLEX WITH [3FE-4S] CLUSTER AND FUSION COMPLEX WITH CYTOCHROME P450 143</scope>
    <scope>FUNCTION</scope>
    <scope>COFACTOR</scope>
    <scope>INTERACTION WITH CYP143</scope>
</reference>
<dbReference type="EMBL" id="AL123456">
    <property type="protein sequence ID" value="CCP44552.1"/>
    <property type="molecule type" value="Genomic_DNA"/>
</dbReference>
<dbReference type="RefSeq" id="NP_216302.1">
    <property type="nucleotide sequence ID" value="NC_000962.3"/>
</dbReference>
<dbReference type="RefSeq" id="WP_003408803.1">
    <property type="nucleotide sequence ID" value="NZ_NVQJ01000037.1"/>
</dbReference>
<dbReference type="PDB" id="8AMQ">
    <property type="method" value="X-ray"/>
    <property type="resolution" value="1.60 A"/>
    <property type="chains" value="A=1-67"/>
</dbReference>
<dbReference type="PDBsum" id="8AMQ"/>
<dbReference type="SMR" id="O53937"/>
<dbReference type="STRING" id="83332.Rv1786"/>
<dbReference type="PaxDb" id="83332-Rv1786"/>
<dbReference type="DNASU" id="885846"/>
<dbReference type="GeneID" id="885846"/>
<dbReference type="KEGG" id="mtu:Rv1786"/>
<dbReference type="KEGG" id="mtv:RVBD_1786"/>
<dbReference type="PATRIC" id="fig|83332.111.peg.1990"/>
<dbReference type="TubercuList" id="Rv1786"/>
<dbReference type="eggNOG" id="COG1141">
    <property type="taxonomic scope" value="Bacteria"/>
</dbReference>
<dbReference type="InParanoid" id="O53937"/>
<dbReference type="OrthoDB" id="3215519at2"/>
<dbReference type="PhylomeDB" id="O53937"/>
<dbReference type="Proteomes" id="UP000001584">
    <property type="component" value="Chromosome"/>
</dbReference>
<dbReference type="GO" id="GO:0051538">
    <property type="term" value="F:3 iron, 4 sulfur cluster binding"/>
    <property type="evidence" value="ECO:0007669"/>
    <property type="project" value="UniProtKB-KW"/>
</dbReference>
<dbReference type="GO" id="GO:0046872">
    <property type="term" value="F:metal ion binding"/>
    <property type="evidence" value="ECO:0007669"/>
    <property type="project" value="UniProtKB-KW"/>
</dbReference>
<dbReference type="Gene3D" id="3.30.70.20">
    <property type="match status" value="1"/>
</dbReference>
<dbReference type="InterPro" id="IPR051269">
    <property type="entry name" value="Fe-S_cluster_ET"/>
</dbReference>
<dbReference type="PANTHER" id="PTHR36923">
    <property type="entry name" value="FERREDOXIN"/>
    <property type="match status" value="1"/>
</dbReference>
<dbReference type="PANTHER" id="PTHR36923:SF3">
    <property type="entry name" value="FERREDOXIN"/>
    <property type="match status" value="1"/>
</dbReference>
<dbReference type="Pfam" id="PF13459">
    <property type="entry name" value="Fer4_15"/>
    <property type="match status" value="1"/>
</dbReference>
<dbReference type="SUPFAM" id="SSF54862">
    <property type="entry name" value="4Fe-4S ferredoxins"/>
    <property type="match status" value="1"/>
</dbReference>
<name>FDXE_MYCTU</name>
<gene>
    <name evidence="2" type="primary">fdxE</name>
    <name evidence="3" type="ordered locus">Rv1786</name>
</gene>
<organism>
    <name type="scientific">Mycobacterium tuberculosis (strain ATCC 25618 / H37Rv)</name>
    <dbReference type="NCBI Taxonomy" id="83332"/>
    <lineage>
        <taxon>Bacteria</taxon>
        <taxon>Bacillati</taxon>
        <taxon>Actinomycetota</taxon>
        <taxon>Actinomycetes</taxon>
        <taxon>Mycobacteriales</taxon>
        <taxon>Mycobacteriaceae</taxon>
        <taxon>Mycobacterium</taxon>
        <taxon>Mycobacterium tuberculosis complex</taxon>
    </lineage>
</organism>
<proteinExistence type="evidence at protein level"/>
<evidence type="ECO:0000269" key="1">
    <source>
    </source>
</evidence>
<evidence type="ECO:0000303" key="2">
    <source>
    </source>
</evidence>
<evidence type="ECO:0000312" key="3">
    <source>
        <dbReference type="EMBL" id="CCP44552.1"/>
    </source>
</evidence>
<evidence type="ECO:0007744" key="4">
    <source>
        <dbReference type="PDB" id="8AMQ"/>
    </source>
</evidence>
<evidence type="ECO:0007829" key="5">
    <source>
        <dbReference type="PDB" id="8AMQ"/>
    </source>
</evidence>
<protein>
    <recommendedName>
        <fullName evidence="2">Ferredoxin FdxE</fullName>
    </recommendedName>
</protein>
<feature type="chain" id="PRO_0000458138" description="Ferredoxin FdxE">
    <location>
        <begin position="1"/>
        <end position="67"/>
    </location>
</feature>
<feature type="binding site" evidence="1 4">
    <location>
        <position position="10"/>
    </location>
    <ligand>
        <name>[3Fe-4S] cluster</name>
        <dbReference type="ChEBI" id="CHEBI:21137"/>
    </ligand>
</feature>
<feature type="binding site" evidence="1 4">
    <location>
        <position position="11"/>
    </location>
    <ligand>
        <name>[3Fe-4S] cluster</name>
        <dbReference type="ChEBI" id="CHEBI:21137"/>
    </ligand>
</feature>
<feature type="binding site" evidence="1 4">
    <location>
        <position position="15"/>
    </location>
    <ligand>
        <name>[3Fe-4S] cluster</name>
        <dbReference type="ChEBI" id="CHEBI:21137"/>
    </ligand>
</feature>
<feature type="binding site" evidence="1 4">
    <location>
        <position position="16"/>
    </location>
    <ligand>
        <name>[3Fe-4S] cluster</name>
        <dbReference type="ChEBI" id="CHEBI:21137"/>
    </ligand>
</feature>
<feature type="binding site" evidence="1 4">
    <location>
        <position position="54"/>
    </location>
    <ligand>
        <name>[3Fe-4S] cluster</name>
        <dbReference type="ChEBI" id="CHEBI:21137"/>
    </ligand>
</feature>
<feature type="strand" evidence="5">
    <location>
        <begin position="2"/>
        <end position="5"/>
    </location>
</feature>
<feature type="turn" evidence="5">
    <location>
        <begin position="7"/>
        <end position="9"/>
    </location>
</feature>
<feature type="helix" evidence="5">
    <location>
        <begin position="15"/>
        <end position="19"/>
    </location>
</feature>
<feature type="turn" evidence="5">
    <location>
        <begin position="21"/>
        <end position="23"/>
    </location>
</feature>
<feature type="helix" evidence="5">
    <location>
        <begin position="41"/>
        <end position="43"/>
    </location>
</feature>
<feature type="helix" evidence="5">
    <location>
        <begin position="44"/>
        <end position="53"/>
    </location>
</feature>
<feature type="strand" evidence="5">
    <location>
        <begin position="59"/>
        <end position="63"/>
    </location>
</feature>
<comment type="function">
    <text evidence="1">Ferredoxin that is the redox partner of cytochrome CYP143, a cytochrome P450 encoded by an adjacent gene.</text>
</comment>
<comment type="cofactor">
    <cofactor evidence="1">
        <name>[3Fe-4S] cluster</name>
        <dbReference type="ChEBI" id="CHEBI:21137"/>
    </cofactor>
    <text evidence="1">Binds 1 [3Fe-4S] cluster per subunit.</text>
</comment>
<comment type="subunit">
    <text evidence="1">Interacts with the cytochrome P450 143 with high affinity (Kd=84 nM).</text>
</comment>
<accession>O53937</accession>
<accession>F2GIX9</accession>
<accession>I6XCH7</accession>
<accession>Q7D7Z0</accession>
<sequence>MKVRLDPSRCVGHAQCYAVDPDLFPIDDSGNSILAEHEVRPEDMQLTRDGVAACPEMALILEEDDAD</sequence>